<keyword id="KW-0030">Aminoacyl-tRNA synthetase</keyword>
<keyword id="KW-0067">ATP-binding</keyword>
<keyword id="KW-0963">Cytoplasm</keyword>
<keyword id="KW-0436">Ligase</keyword>
<keyword id="KW-0479">Metal-binding</keyword>
<keyword id="KW-0547">Nucleotide-binding</keyword>
<keyword id="KW-0648">Protein biosynthesis</keyword>
<keyword id="KW-0862">Zinc</keyword>
<accession>B8D815</accession>
<organism>
    <name type="scientific">Buchnera aphidicola subsp. Acyrthosiphon pisum (strain Tuc7)</name>
    <dbReference type="NCBI Taxonomy" id="561501"/>
    <lineage>
        <taxon>Bacteria</taxon>
        <taxon>Pseudomonadati</taxon>
        <taxon>Pseudomonadota</taxon>
        <taxon>Gammaproteobacteria</taxon>
        <taxon>Enterobacterales</taxon>
        <taxon>Erwiniaceae</taxon>
        <taxon>Buchnera</taxon>
    </lineage>
</organism>
<comment type="catalytic activity">
    <reaction evidence="1">
        <text>tRNA(Cys) + L-cysteine + ATP = L-cysteinyl-tRNA(Cys) + AMP + diphosphate</text>
        <dbReference type="Rhea" id="RHEA:17773"/>
        <dbReference type="Rhea" id="RHEA-COMP:9661"/>
        <dbReference type="Rhea" id="RHEA-COMP:9679"/>
        <dbReference type="ChEBI" id="CHEBI:30616"/>
        <dbReference type="ChEBI" id="CHEBI:33019"/>
        <dbReference type="ChEBI" id="CHEBI:35235"/>
        <dbReference type="ChEBI" id="CHEBI:78442"/>
        <dbReference type="ChEBI" id="CHEBI:78517"/>
        <dbReference type="ChEBI" id="CHEBI:456215"/>
        <dbReference type="EC" id="6.1.1.16"/>
    </reaction>
</comment>
<comment type="cofactor">
    <cofactor evidence="1">
        <name>Zn(2+)</name>
        <dbReference type="ChEBI" id="CHEBI:29105"/>
    </cofactor>
    <text evidence="1">Binds 1 zinc ion per subunit.</text>
</comment>
<comment type="subunit">
    <text evidence="1">Monomer.</text>
</comment>
<comment type="subcellular location">
    <subcellularLocation>
        <location evidence="1">Cytoplasm</location>
    </subcellularLocation>
</comment>
<comment type="similarity">
    <text evidence="1">Belongs to the class-I aminoacyl-tRNA synthetase family.</text>
</comment>
<dbReference type="EC" id="6.1.1.16" evidence="1"/>
<dbReference type="EMBL" id="CP001158">
    <property type="protein sequence ID" value="ACL30280.1"/>
    <property type="molecule type" value="Genomic_DNA"/>
</dbReference>
<dbReference type="RefSeq" id="WP_010896141.1">
    <property type="nucleotide sequence ID" value="NC_011834.1"/>
</dbReference>
<dbReference type="SMR" id="B8D815"/>
<dbReference type="KEGG" id="bau:BUAPTUC7_481"/>
<dbReference type="HOGENOM" id="CLU_013528_0_1_6"/>
<dbReference type="GO" id="GO:0005829">
    <property type="term" value="C:cytosol"/>
    <property type="evidence" value="ECO:0007669"/>
    <property type="project" value="TreeGrafter"/>
</dbReference>
<dbReference type="GO" id="GO:0005524">
    <property type="term" value="F:ATP binding"/>
    <property type="evidence" value="ECO:0007669"/>
    <property type="project" value="UniProtKB-UniRule"/>
</dbReference>
<dbReference type="GO" id="GO:0004817">
    <property type="term" value="F:cysteine-tRNA ligase activity"/>
    <property type="evidence" value="ECO:0007669"/>
    <property type="project" value="UniProtKB-UniRule"/>
</dbReference>
<dbReference type="GO" id="GO:0008270">
    <property type="term" value="F:zinc ion binding"/>
    <property type="evidence" value="ECO:0007669"/>
    <property type="project" value="UniProtKB-UniRule"/>
</dbReference>
<dbReference type="GO" id="GO:0006423">
    <property type="term" value="P:cysteinyl-tRNA aminoacylation"/>
    <property type="evidence" value="ECO:0007669"/>
    <property type="project" value="UniProtKB-UniRule"/>
</dbReference>
<dbReference type="CDD" id="cd07963">
    <property type="entry name" value="Anticodon_Ia_Cys"/>
    <property type="match status" value="1"/>
</dbReference>
<dbReference type="CDD" id="cd00672">
    <property type="entry name" value="CysRS_core"/>
    <property type="match status" value="1"/>
</dbReference>
<dbReference type="FunFam" id="3.40.50.620:FF:000009">
    <property type="entry name" value="Cysteine--tRNA ligase"/>
    <property type="match status" value="1"/>
</dbReference>
<dbReference type="Gene3D" id="1.20.120.1910">
    <property type="entry name" value="Cysteine-tRNA ligase, C-terminal anti-codon recognition domain"/>
    <property type="match status" value="1"/>
</dbReference>
<dbReference type="Gene3D" id="3.40.50.620">
    <property type="entry name" value="HUPs"/>
    <property type="match status" value="1"/>
</dbReference>
<dbReference type="HAMAP" id="MF_00041">
    <property type="entry name" value="Cys_tRNA_synth"/>
    <property type="match status" value="1"/>
</dbReference>
<dbReference type="InterPro" id="IPR015803">
    <property type="entry name" value="Cys-tRNA-ligase"/>
</dbReference>
<dbReference type="InterPro" id="IPR015273">
    <property type="entry name" value="Cys-tRNA-synt_Ia_DALR"/>
</dbReference>
<dbReference type="InterPro" id="IPR024909">
    <property type="entry name" value="Cys-tRNA/MSH_ligase"/>
</dbReference>
<dbReference type="InterPro" id="IPR014729">
    <property type="entry name" value="Rossmann-like_a/b/a_fold"/>
</dbReference>
<dbReference type="InterPro" id="IPR032678">
    <property type="entry name" value="tRNA-synt_1_cat_dom"/>
</dbReference>
<dbReference type="InterPro" id="IPR009080">
    <property type="entry name" value="tRNAsynth_Ia_anticodon-bd"/>
</dbReference>
<dbReference type="NCBIfam" id="TIGR00435">
    <property type="entry name" value="cysS"/>
    <property type="match status" value="1"/>
</dbReference>
<dbReference type="PANTHER" id="PTHR10890:SF3">
    <property type="entry name" value="CYSTEINE--TRNA LIGASE, CYTOPLASMIC"/>
    <property type="match status" value="1"/>
</dbReference>
<dbReference type="PANTHER" id="PTHR10890">
    <property type="entry name" value="CYSTEINYL-TRNA SYNTHETASE"/>
    <property type="match status" value="1"/>
</dbReference>
<dbReference type="Pfam" id="PF09190">
    <property type="entry name" value="DALR_2"/>
    <property type="match status" value="1"/>
</dbReference>
<dbReference type="Pfam" id="PF01406">
    <property type="entry name" value="tRNA-synt_1e"/>
    <property type="match status" value="1"/>
</dbReference>
<dbReference type="PRINTS" id="PR00983">
    <property type="entry name" value="TRNASYNTHCYS"/>
</dbReference>
<dbReference type="SMART" id="SM00840">
    <property type="entry name" value="DALR_2"/>
    <property type="match status" value="1"/>
</dbReference>
<dbReference type="SUPFAM" id="SSF47323">
    <property type="entry name" value="Anticodon-binding domain of a subclass of class I aminoacyl-tRNA synthetases"/>
    <property type="match status" value="1"/>
</dbReference>
<dbReference type="SUPFAM" id="SSF52374">
    <property type="entry name" value="Nucleotidylyl transferase"/>
    <property type="match status" value="1"/>
</dbReference>
<proteinExistence type="inferred from homology"/>
<name>SYC_BUCAT</name>
<feature type="chain" id="PRO_1000199048" description="Cysteine--tRNA ligase">
    <location>
        <begin position="1"/>
        <end position="464"/>
    </location>
</feature>
<feature type="short sequence motif" description="'HIGH' region">
    <location>
        <begin position="30"/>
        <end position="40"/>
    </location>
</feature>
<feature type="short sequence motif" description="'KMSKS' region">
    <location>
        <begin position="266"/>
        <end position="270"/>
    </location>
</feature>
<feature type="binding site" evidence="1">
    <location>
        <position position="28"/>
    </location>
    <ligand>
        <name>Zn(2+)</name>
        <dbReference type="ChEBI" id="CHEBI:29105"/>
    </ligand>
</feature>
<feature type="binding site" evidence="1">
    <location>
        <position position="209"/>
    </location>
    <ligand>
        <name>Zn(2+)</name>
        <dbReference type="ChEBI" id="CHEBI:29105"/>
    </ligand>
</feature>
<feature type="binding site" evidence="1">
    <location>
        <position position="234"/>
    </location>
    <ligand>
        <name>Zn(2+)</name>
        <dbReference type="ChEBI" id="CHEBI:29105"/>
    </ligand>
</feature>
<feature type="binding site" evidence="1">
    <location>
        <position position="238"/>
    </location>
    <ligand>
        <name>Zn(2+)</name>
        <dbReference type="ChEBI" id="CHEBI:29105"/>
    </ligand>
</feature>
<feature type="binding site" evidence="1">
    <location>
        <position position="269"/>
    </location>
    <ligand>
        <name>ATP</name>
        <dbReference type="ChEBI" id="CHEBI:30616"/>
    </ligand>
</feature>
<protein>
    <recommendedName>
        <fullName evidence="1">Cysteine--tRNA ligase</fullName>
        <ecNumber evidence="1">6.1.1.16</ecNumber>
    </recommendedName>
    <alternativeName>
        <fullName evidence="1">Cysteinyl-tRNA synthetase</fullName>
        <shortName evidence="1">CysRS</shortName>
    </alternativeName>
</protein>
<gene>
    <name evidence="1" type="primary">cysS</name>
    <name type="ordered locus">BUAPTUC7_481</name>
</gene>
<sequence>MLKIFNTLTSTKEIFTPIKKNRVNLYVCGVTVYDFCHIGHGRTFVVFDMIVRYLRFSGFQVKYVRNITDIDDKIISKSTKEKKKINTFTASMIKEMHKDFDLLGISVPDEEPRVTDYIDNIIRIITTLIKKKHAYIHKNGDVIFSIDSDPNYGTLSRQSLTSLESGSRIPLNNMKKNPLDFILWKSSNKEEYSWDSPWGKGRPGWHIECSAITNVFFNNSIDIHGGGSDLLFPHHENERSQSICFNNKSMINFWMHTGMVILNNKKMSKSLGNVYFLRNILKDCDAEVLRYFFLSTHYRHPIYYCEKNLDQAYTSLKYLYTALYDTNPFFNNEEGLNFELEFYNAMNDDFNTPAVFSIFFKIARKINFLKNKDILKTNKFAFRLKYLANNLGFLFQDPKEFLQKKTTLNLLTLKEIQLLIEKRNIARQSKLWQEADNIRKKLMSLDIILEDLPDKTIWRKNKKS</sequence>
<evidence type="ECO:0000255" key="1">
    <source>
        <dbReference type="HAMAP-Rule" id="MF_00041"/>
    </source>
</evidence>
<reference key="1">
    <citation type="journal article" date="2009" name="Science">
        <title>The dynamics and time scale of ongoing genomic erosion in symbiotic bacteria.</title>
        <authorList>
            <person name="Moran N.A."/>
            <person name="McLaughlin H.J."/>
            <person name="Sorek R."/>
        </authorList>
    </citation>
    <scope>NUCLEOTIDE SEQUENCE [LARGE SCALE GENOMIC DNA]</scope>
    <source>
        <strain>Tuc7</strain>
    </source>
</reference>